<name>MITD1_MOUSE</name>
<gene>
    <name type="primary">Mitd1</name>
</gene>
<dbReference type="EMBL" id="AK005342">
    <property type="protein sequence ID" value="BAB23964.1"/>
    <property type="status" value="ALT_FRAME"/>
    <property type="molecule type" value="mRNA"/>
</dbReference>
<dbReference type="EMBL" id="AK171903">
    <property type="protein sequence ID" value="BAE42727.1"/>
    <property type="molecule type" value="mRNA"/>
</dbReference>
<dbReference type="EMBL" id="BC020137">
    <property type="protein sequence ID" value="AAH20137.1"/>
    <property type="molecule type" value="mRNA"/>
</dbReference>
<dbReference type="CCDS" id="CCDS35542.1"/>
<dbReference type="RefSeq" id="NP_001343191.1">
    <property type="nucleotide sequence ID" value="NM_001356262.1"/>
</dbReference>
<dbReference type="RefSeq" id="NP_081189.1">
    <property type="nucleotide sequence ID" value="NM_026913.3"/>
</dbReference>
<dbReference type="PDB" id="1WFD">
    <property type="method" value="NMR"/>
    <property type="chains" value="A=8-87"/>
</dbReference>
<dbReference type="PDBsum" id="1WFD"/>
<dbReference type="SMR" id="Q8VDV8"/>
<dbReference type="BioGRID" id="213179">
    <property type="interactions" value="5"/>
</dbReference>
<dbReference type="FunCoup" id="Q8VDV8">
    <property type="interactions" value="1246"/>
</dbReference>
<dbReference type="IntAct" id="Q8VDV8">
    <property type="interactions" value="1"/>
</dbReference>
<dbReference type="STRING" id="10090.ENSMUSP00000027257"/>
<dbReference type="iPTMnet" id="Q8VDV8"/>
<dbReference type="PhosphoSitePlus" id="Q8VDV8"/>
<dbReference type="PaxDb" id="10090-ENSMUSP00000027257"/>
<dbReference type="PeptideAtlas" id="Q8VDV8"/>
<dbReference type="ProteomicsDB" id="295619"/>
<dbReference type="Pumba" id="Q8VDV8"/>
<dbReference type="Antibodypedia" id="47520">
    <property type="antibodies" value="83 antibodies from 22 providers"/>
</dbReference>
<dbReference type="Ensembl" id="ENSMUST00000027257.10">
    <property type="protein sequence ID" value="ENSMUSP00000027257.9"/>
    <property type="gene ID" value="ENSMUSG00000026088.16"/>
</dbReference>
<dbReference type="Ensembl" id="ENSMUST00000139725.8">
    <property type="protein sequence ID" value="ENSMUSP00000123009.2"/>
    <property type="gene ID" value="ENSMUSG00000026088.16"/>
</dbReference>
<dbReference type="GeneID" id="69028"/>
<dbReference type="KEGG" id="mmu:69028"/>
<dbReference type="UCSC" id="uc007asi.1">
    <property type="organism name" value="mouse"/>
</dbReference>
<dbReference type="AGR" id="MGI:1916278"/>
<dbReference type="CTD" id="129531"/>
<dbReference type="MGI" id="MGI:1916278">
    <property type="gene designation" value="Mitd1"/>
</dbReference>
<dbReference type="VEuPathDB" id="HostDB:ENSMUSG00000026088"/>
<dbReference type="eggNOG" id="KOG4509">
    <property type="taxonomic scope" value="Eukaryota"/>
</dbReference>
<dbReference type="GeneTree" id="ENSGT00390000010868"/>
<dbReference type="HOGENOM" id="CLU_088713_1_0_1"/>
<dbReference type="InParanoid" id="Q8VDV8"/>
<dbReference type="OMA" id="FYKASNP"/>
<dbReference type="OrthoDB" id="19553at2759"/>
<dbReference type="PhylomeDB" id="Q8VDV8"/>
<dbReference type="TreeFam" id="TF313066"/>
<dbReference type="BioGRID-ORCS" id="69028">
    <property type="hits" value="2 hits in 76 CRISPR screens"/>
</dbReference>
<dbReference type="ChiTaRS" id="Mitd1">
    <property type="organism name" value="mouse"/>
</dbReference>
<dbReference type="EvolutionaryTrace" id="Q8VDV8"/>
<dbReference type="PRO" id="PR:Q8VDV8"/>
<dbReference type="Proteomes" id="UP000000589">
    <property type="component" value="Chromosome 1"/>
</dbReference>
<dbReference type="RNAct" id="Q8VDV8">
    <property type="molecule type" value="protein"/>
</dbReference>
<dbReference type="Bgee" id="ENSMUSG00000026088">
    <property type="expression patterns" value="Expressed in ectoplacental cone and 252 other cell types or tissues"/>
</dbReference>
<dbReference type="GO" id="GO:0031902">
    <property type="term" value="C:late endosome membrane"/>
    <property type="evidence" value="ECO:0007669"/>
    <property type="project" value="UniProtKB-SubCell"/>
</dbReference>
<dbReference type="GO" id="GO:0030496">
    <property type="term" value="C:midbody"/>
    <property type="evidence" value="ECO:0007669"/>
    <property type="project" value="UniProtKB-SubCell"/>
</dbReference>
<dbReference type="GO" id="GO:0042802">
    <property type="term" value="F:identical protein binding"/>
    <property type="evidence" value="ECO:0007669"/>
    <property type="project" value="Ensembl"/>
</dbReference>
<dbReference type="GO" id="GO:0035091">
    <property type="term" value="F:phosphatidylinositol binding"/>
    <property type="evidence" value="ECO:0007669"/>
    <property type="project" value="Ensembl"/>
</dbReference>
<dbReference type="GO" id="GO:0019904">
    <property type="term" value="F:protein domain specific binding"/>
    <property type="evidence" value="ECO:0007669"/>
    <property type="project" value="Ensembl"/>
</dbReference>
<dbReference type="GO" id="GO:0061952">
    <property type="term" value="P:midbody abscission"/>
    <property type="evidence" value="ECO:0007669"/>
    <property type="project" value="Ensembl"/>
</dbReference>
<dbReference type="CDD" id="cd02683">
    <property type="entry name" value="MIT_1"/>
    <property type="match status" value="1"/>
</dbReference>
<dbReference type="CDD" id="cd02685">
    <property type="entry name" value="MIT_C"/>
    <property type="match status" value="1"/>
</dbReference>
<dbReference type="FunFam" id="1.20.58.80:FF:000021">
    <property type="entry name" value="MIT domain-containing protein 1"/>
    <property type="match status" value="1"/>
</dbReference>
<dbReference type="Gene3D" id="3.30.870.30">
    <property type="entry name" value="MITD, C-terminal phospholipase D-like domain"/>
    <property type="match status" value="1"/>
</dbReference>
<dbReference type="Gene3D" id="1.20.58.80">
    <property type="entry name" value="Phosphotransferase system, lactose/cellobiose-type IIA subunit"/>
    <property type="match status" value="1"/>
</dbReference>
<dbReference type="InterPro" id="IPR007330">
    <property type="entry name" value="MIT_dom"/>
</dbReference>
<dbReference type="InterPro" id="IPR036181">
    <property type="entry name" value="MIT_dom_sf"/>
</dbReference>
<dbReference type="InterPro" id="IPR052817">
    <property type="entry name" value="MIT_domain_contain_protein1"/>
</dbReference>
<dbReference type="InterPro" id="IPR032341">
    <property type="entry name" value="MITD1_C"/>
</dbReference>
<dbReference type="InterPro" id="IPR038113">
    <property type="entry name" value="MITD1_C_sf"/>
</dbReference>
<dbReference type="InterPro" id="IPR045331">
    <property type="entry name" value="MITD1_N"/>
</dbReference>
<dbReference type="PANTHER" id="PTHR21222">
    <property type="entry name" value="MIT DOMAIN-CONTAINING PROTEIN 1"/>
    <property type="match status" value="1"/>
</dbReference>
<dbReference type="PANTHER" id="PTHR21222:SF1">
    <property type="entry name" value="MIT DOMAIN-CONTAINING PROTEIN 1"/>
    <property type="match status" value="1"/>
</dbReference>
<dbReference type="Pfam" id="PF04212">
    <property type="entry name" value="MIT"/>
    <property type="match status" value="1"/>
</dbReference>
<dbReference type="Pfam" id="PF16565">
    <property type="entry name" value="MIT_C"/>
    <property type="match status" value="1"/>
</dbReference>
<dbReference type="SMART" id="SM00745">
    <property type="entry name" value="MIT"/>
    <property type="match status" value="1"/>
</dbReference>
<dbReference type="SUPFAM" id="SSF116846">
    <property type="entry name" value="MIT domain"/>
    <property type="match status" value="1"/>
</dbReference>
<comment type="function">
    <text evidence="1">Required for efficient abscission at the end of cytokinesis, together with components of the ESCRT-III complex.</text>
</comment>
<comment type="subunit">
    <text evidence="1">Homodimer. Interacts (via MIT domain) with CHMP1A, CHMP1B, CHMP2A and IST1 (By similarity).</text>
</comment>
<comment type="subcellular location">
    <subcellularLocation>
        <location evidence="1">Late endosome membrane</location>
        <topology evidence="1">Peripheral membrane protein</topology>
        <orientation evidence="1">Cytoplasmic side</orientation>
    </subcellularLocation>
    <subcellularLocation>
        <location evidence="1">Midbody</location>
    </subcellularLocation>
    <subcellularLocation>
        <location evidence="1">Membrane</location>
        <topology evidence="1">Peripheral membrane protein</topology>
        <orientation evidence="1">Cytoplasmic side</orientation>
    </subcellularLocation>
    <text evidence="1">During cytokinesis, recruited to the midbody via interaction with CHMP1A. Interacts with membranes enriched in phosphoinositides (By similarity).</text>
</comment>
<comment type="domain">
    <text evidence="1">The C-terminal domain interacts with lipid membranes containing acidic phosphoinositides and is required for location at the midbody.</text>
</comment>
<comment type="domain">
    <text evidence="1">The MIT domain interacts with the MIT-interacting motifs of several components of the ESCRT-III complex.</text>
</comment>
<comment type="sequence caution" evidence="2">
    <conflict type="frameshift">
        <sequence resource="EMBL-CDS" id="BAB23964"/>
    </conflict>
</comment>
<organism>
    <name type="scientific">Mus musculus</name>
    <name type="common">Mouse</name>
    <dbReference type="NCBI Taxonomy" id="10090"/>
    <lineage>
        <taxon>Eukaryota</taxon>
        <taxon>Metazoa</taxon>
        <taxon>Chordata</taxon>
        <taxon>Craniata</taxon>
        <taxon>Vertebrata</taxon>
        <taxon>Euteleostomi</taxon>
        <taxon>Mammalia</taxon>
        <taxon>Eutheria</taxon>
        <taxon>Euarchontoglires</taxon>
        <taxon>Glires</taxon>
        <taxon>Rodentia</taxon>
        <taxon>Myomorpha</taxon>
        <taxon>Muroidea</taxon>
        <taxon>Muridae</taxon>
        <taxon>Murinae</taxon>
        <taxon>Mus</taxon>
        <taxon>Mus</taxon>
    </lineage>
</organism>
<protein>
    <recommendedName>
        <fullName>MIT domain-containing protein 1</fullName>
    </recommendedName>
</protein>
<keyword id="KW-0002">3D-structure</keyword>
<keyword id="KW-0131">Cell cycle</keyword>
<keyword id="KW-0132">Cell division</keyword>
<keyword id="KW-0967">Endosome</keyword>
<keyword id="KW-0472">Membrane</keyword>
<keyword id="KW-1185">Reference proteome</keyword>
<keyword id="KW-0813">Transport</keyword>
<evidence type="ECO:0000250" key="1"/>
<evidence type="ECO:0000305" key="2"/>
<evidence type="ECO:0007829" key="3">
    <source>
        <dbReference type="PDB" id="1WFD"/>
    </source>
</evidence>
<reference key="1">
    <citation type="journal article" date="2005" name="Science">
        <title>The transcriptional landscape of the mammalian genome.</title>
        <authorList>
            <person name="Carninci P."/>
            <person name="Kasukawa T."/>
            <person name="Katayama S."/>
            <person name="Gough J."/>
            <person name="Frith M.C."/>
            <person name="Maeda N."/>
            <person name="Oyama R."/>
            <person name="Ravasi T."/>
            <person name="Lenhard B."/>
            <person name="Wells C."/>
            <person name="Kodzius R."/>
            <person name="Shimokawa K."/>
            <person name="Bajic V.B."/>
            <person name="Brenner S.E."/>
            <person name="Batalov S."/>
            <person name="Forrest A.R."/>
            <person name="Zavolan M."/>
            <person name="Davis M.J."/>
            <person name="Wilming L.G."/>
            <person name="Aidinis V."/>
            <person name="Allen J.E."/>
            <person name="Ambesi-Impiombato A."/>
            <person name="Apweiler R."/>
            <person name="Aturaliya R.N."/>
            <person name="Bailey T.L."/>
            <person name="Bansal M."/>
            <person name="Baxter L."/>
            <person name="Beisel K.W."/>
            <person name="Bersano T."/>
            <person name="Bono H."/>
            <person name="Chalk A.M."/>
            <person name="Chiu K.P."/>
            <person name="Choudhary V."/>
            <person name="Christoffels A."/>
            <person name="Clutterbuck D.R."/>
            <person name="Crowe M.L."/>
            <person name="Dalla E."/>
            <person name="Dalrymple B.P."/>
            <person name="de Bono B."/>
            <person name="Della Gatta G."/>
            <person name="di Bernardo D."/>
            <person name="Down T."/>
            <person name="Engstrom P."/>
            <person name="Fagiolini M."/>
            <person name="Faulkner G."/>
            <person name="Fletcher C.F."/>
            <person name="Fukushima T."/>
            <person name="Furuno M."/>
            <person name="Futaki S."/>
            <person name="Gariboldi M."/>
            <person name="Georgii-Hemming P."/>
            <person name="Gingeras T.R."/>
            <person name="Gojobori T."/>
            <person name="Green R.E."/>
            <person name="Gustincich S."/>
            <person name="Harbers M."/>
            <person name="Hayashi Y."/>
            <person name="Hensch T.K."/>
            <person name="Hirokawa N."/>
            <person name="Hill D."/>
            <person name="Huminiecki L."/>
            <person name="Iacono M."/>
            <person name="Ikeo K."/>
            <person name="Iwama A."/>
            <person name="Ishikawa T."/>
            <person name="Jakt M."/>
            <person name="Kanapin A."/>
            <person name="Katoh M."/>
            <person name="Kawasawa Y."/>
            <person name="Kelso J."/>
            <person name="Kitamura H."/>
            <person name="Kitano H."/>
            <person name="Kollias G."/>
            <person name="Krishnan S.P."/>
            <person name="Kruger A."/>
            <person name="Kummerfeld S.K."/>
            <person name="Kurochkin I.V."/>
            <person name="Lareau L.F."/>
            <person name="Lazarevic D."/>
            <person name="Lipovich L."/>
            <person name="Liu J."/>
            <person name="Liuni S."/>
            <person name="McWilliam S."/>
            <person name="Madan Babu M."/>
            <person name="Madera M."/>
            <person name="Marchionni L."/>
            <person name="Matsuda H."/>
            <person name="Matsuzawa S."/>
            <person name="Miki H."/>
            <person name="Mignone F."/>
            <person name="Miyake S."/>
            <person name="Morris K."/>
            <person name="Mottagui-Tabar S."/>
            <person name="Mulder N."/>
            <person name="Nakano N."/>
            <person name="Nakauchi H."/>
            <person name="Ng P."/>
            <person name="Nilsson R."/>
            <person name="Nishiguchi S."/>
            <person name="Nishikawa S."/>
            <person name="Nori F."/>
            <person name="Ohara O."/>
            <person name="Okazaki Y."/>
            <person name="Orlando V."/>
            <person name="Pang K.C."/>
            <person name="Pavan W.J."/>
            <person name="Pavesi G."/>
            <person name="Pesole G."/>
            <person name="Petrovsky N."/>
            <person name="Piazza S."/>
            <person name="Reed J."/>
            <person name="Reid J.F."/>
            <person name="Ring B.Z."/>
            <person name="Ringwald M."/>
            <person name="Rost B."/>
            <person name="Ruan Y."/>
            <person name="Salzberg S.L."/>
            <person name="Sandelin A."/>
            <person name="Schneider C."/>
            <person name="Schoenbach C."/>
            <person name="Sekiguchi K."/>
            <person name="Semple C.A."/>
            <person name="Seno S."/>
            <person name="Sessa L."/>
            <person name="Sheng Y."/>
            <person name="Shibata Y."/>
            <person name="Shimada H."/>
            <person name="Shimada K."/>
            <person name="Silva D."/>
            <person name="Sinclair B."/>
            <person name="Sperling S."/>
            <person name="Stupka E."/>
            <person name="Sugiura K."/>
            <person name="Sultana R."/>
            <person name="Takenaka Y."/>
            <person name="Taki K."/>
            <person name="Tammoja K."/>
            <person name="Tan S.L."/>
            <person name="Tang S."/>
            <person name="Taylor M.S."/>
            <person name="Tegner J."/>
            <person name="Teichmann S.A."/>
            <person name="Ueda H.R."/>
            <person name="van Nimwegen E."/>
            <person name="Verardo R."/>
            <person name="Wei C.L."/>
            <person name="Yagi K."/>
            <person name="Yamanishi H."/>
            <person name="Zabarovsky E."/>
            <person name="Zhu S."/>
            <person name="Zimmer A."/>
            <person name="Hide W."/>
            <person name="Bult C."/>
            <person name="Grimmond S.M."/>
            <person name="Teasdale R.D."/>
            <person name="Liu E.T."/>
            <person name="Brusic V."/>
            <person name="Quackenbush J."/>
            <person name="Wahlestedt C."/>
            <person name="Mattick J.S."/>
            <person name="Hume D.A."/>
            <person name="Kai C."/>
            <person name="Sasaki D."/>
            <person name="Tomaru Y."/>
            <person name="Fukuda S."/>
            <person name="Kanamori-Katayama M."/>
            <person name="Suzuki M."/>
            <person name="Aoki J."/>
            <person name="Arakawa T."/>
            <person name="Iida J."/>
            <person name="Imamura K."/>
            <person name="Itoh M."/>
            <person name="Kato T."/>
            <person name="Kawaji H."/>
            <person name="Kawagashira N."/>
            <person name="Kawashima T."/>
            <person name="Kojima M."/>
            <person name="Kondo S."/>
            <person name="Konno H."/>
            <person name="Nakano K."/>
            <person name="Ninomiya N."/>
            <person name="Nishio T."/>
            <person name="Okada M."/>
            <person name="Plessy C."/>
            <person name="Shibata K."/>
            <person name="Shiraki T."/>
            <person name="Suzuki S."/>
            <person name="Tagami M."/>
            <person name="Waki K."/>
            <person name="Watahiki A."/>
            <person name="Okamura-Oho Y."/>
            <person name="Suzuki H."/>
            <person name="Kawai J."/>
            <person name="Hayashizaki Y."/>
        </authorList>
    </citation>
    <scope>NUCLEOTIDE SEQUENCE [LARGE SCALE MRNA]</scope>
    <source>
        <strain>C57BL/6J</strain>
        <strain>NOD</strain>
        <tissue>Cerebellum</tissue>
        <tissue>Spleen</tissue>
    </source>
</reference>
<reference key="2">
    <citation type="journal article" date="2004" name="Genome Res.">
        <title>The status, quality, and expansion of the NIH full-length cDNA project: the Mammalian Gene Collection (MGC).</title>
        <authorList>
            <consortium name="The MGC Project Team"/>
        </authorList>
    </citation>
    <scope>NUCLEOTIDE SEQUENCE [LARGE SCALE MRNA]</scope>
    <source>
        <strain>FVB/N</strain>
        <tissue>Mammary tumor</tissue>
    </source>
</reference>
<reference key="3">
    <citation type="journal article" date="2010" name="Cell">
        <title>A tissue-specific atlas of mouse protein phosphorylation and expression.</title>
        <authorList>
            <person name="Huttlin E.L."/>
            <person name="Jedrychowski M.P."/>
            <person name="Elias J.E."/>
            <person name="Goswami T."/>
            <person name="Rad R."/>
            <person name="Beausoleil S.A."/>
            <person name="Villen J."/>
            <person name="Haas W."/>
            <person name="Sowa M.E."/>
            <person name="Gygi S.P."/>
        </authorList>
    </citation>
    <scope>IDENTIFICATION BY MASS SPECTROMETRY [LARGE SCALE ANALYSIS]</scope>
    <source>
        <tissue>Spleen</tissue>
        <tissue>Testis</tissue>
    </source>
</reference>
<reference key="4">
    <citation type="submission" date="2004-11" db="PDB data bank">
        <title>Solution structure of mouse MIT domain.</title>
        <authorList>
            <consortium name="RIKEN structural genomics initiative (RSGI)"/>
        </authorList>
    </citation>
    <scope>STRUCTURE BY NMR OF 7-87</scope>
</reference>
<feature type="chain" id="PRO_0000260496" description="MIT domain-containing protein 1">
    <location>
        <begin position="1"/>
        <end position="249"/>
    </location>
</feature>
<feature type="domain" description="MIT">
    <location>
        <begin position="8"/>
        <end position="86"/>
    </location>
</feature>
<feature type="region of interest" description="Important for association with membranes" evidence="1">
    <location>
        <begin position="168"/>
        <end position="231"/>
    </location>
</feature>
<feature type="sequence conflict" description="In Ref. 1; BAB23964." evidence="2" ref="1">
    <original>G</original>
    <variation>A</variation>
    <location>
        <position position="210"/>
    </location>
</feature>
<feature type="helix" evidence="3">
    <location>
        <begin position="11"/>
        <end position="27"/>
    </location>
</feature>
<feature type="helix" evidence="3">
    <location>
        <begin position="31"/>
        <end position="50"/>
    </location>
</feature>
<feature type="helix" evidence="3">
    <location>
        <begin position="55"/>
        <end position="85"/>
    </location>
</feature>
<proteinExistence type="evidence at protein level"/>
<accession>Q8VDV8</accession>
<accession>Q9DB13</accession>
<sequence>MAKSSLGQDSDSTAAVAVLKRAVELDAESRYQQALVCYQEGIDMLLQVLKGTKESSKRCVLRTKISGYMDRAENIKKYLDQEKEDGKYHKQIKIEENATGFSYESLFREYLHETVTEVWIEDPYIRQTHQLYNFLRFCEMLIKKPCKVRTIHLLTSGYEGLGNTQQSSGLEEIKQSLGSHGVVLEINYSSSIHDREIRFNNGWMIKIGRGLDYFKKPQGRFSLGYYDLDLRPCHETTVDIFHNKHTKKI</sequence>